<reference key="1">
    <citation type="submission" date="2005-08" db="EMBL/GenBank/DDBJ databases">
        <title>Complete sequence of Pelodictyon luteolum DSM 273.</title>
        <authorList>
            <consortium name="US DOE Joint Genome Institute"/>
            <person name="Copeland A."/>
            <person name="Lucas S."/>
            <person name="Lapidus A."/>
            <person name="Barry K."/>
            <person name="Detter J.C."/>
            <person name="Glavina T."/>
            <person name="Hammon N."/>
            <person name="Israni S."/>
            <person name="Pitluck S."/>
            <person name="Bryant D."/>
            <person name="Schmutz J."/>
            <person name="Larimer F."/>
            <person name="Land M."/>
            <person name="Kyrpides N."/>
            <person name="Ivanova N."/>
            <person name="Richardson P."/>
        </authorList>
    </citation>
    <scope>NUCLEOTIDE SEQUENCE [LARGE SCALE GENOMIC DNA]</scope>
    <source>
        <strain>DSM 273 / BCRC 81028 / 2530</strain>
    </source>
</reference>
<gene>
    <name evidence="1" type="primary">gmk</name>
    <name type="ordered locus">Plut_1773</name>
</gene>
<accession>Q3B204</accession>
<evidence type="ECO:0000255" key="1">
    <source>
        <dbReference type="HAMAP-Rule" id="MF_00328"/>
    </source>
</evidence>
<name>KGUA_CHLL3</name>
<sequence length="197" mass="22252">MAEEIERVGRLVVFSAPSGTGKSTIARRVLERFPSMRFSVSATTRPMREGEVDGVNYHFLSKEDFESEIRNGGFIEHEFFFGNHYGTLLQKTREAMAQGTDLLLDLDVKGAMNLKKLFPDSSLLVFLAPPSMDVLKERLQSRKSEDEESLKLRLERARLELGFADRFDTVIINDTLEDAVEAVILAISNFLSTKQTT</sequence>
<dbReference type="EC" id="2.7.4.8" evidence="1"/>
<dbReference type="EMBL" id="CP000096">
    <property type="protein sequence ID" value="ABB24627.1"/>
    <property type="molecule type" value="Genomic_DNA"/>
</dbReference>
<dbReference type="RefSeq" id="WP_011358499.1">
    <property type="nucleotide sequence ID" value="NC_007512.1"/>
</dbReference>
<dbReference type="SMR" id="Q3B204"/>
<dbReference type="STRING" id="319225.Plut_1773"/>
<dbReference type="KEGG" id="plt:Plut_1773"/>
<dbReference type="eggNOG" id="COG0194">
    <property type="taxonomic scope" value="Bacteria"/>
</dbReference>
<dbReference type="HOGENOM" id="CLU_001715_1_1_10"/>
<dbReference type="OrthoDB" id="9808150at2"/>
<dbReference type="Proteomes" id="UP000002709">
    <property type="component" value="Chromosome"/>
</dbReference>
<dbReference type="GO" id="GO:0005829">
    <property type="term" value="C:cytosol"/>
    <property type="evidence" value="ECO:0007669"/>
    <property type="project" value="TreeGrafter"/>
</dbReference>
<dbReference type="GO" id="GO:0005524">
    <property type="term" value="F:ATP binding"/>
    <property type="evidence" value="ECO:0007669"/>
    <property type="project" value="UniProtKB-UniRule"/>
</dbReference>
<dbReference type="GO" id="GO:0004385">
    <property type="term" value="F:guanylate kinase activity"/>
    <property type="evidence" value="ECO:0007669"/>
    <property type="project" value="UniProtKB-UniRule"/>
</dbReference>
<dbReference type="CDD" id="cd00071">
    <property type="entry name" value="GMPK"/>
    <property type="match status" value="1"/>
</dbReference>
<dbReference type="FunFam" id="3.30.63.10:FF:000002">
    <property type="entry name" value="Guanylate kinase 1"/>
    <property type="match status" value="1"/>
</dbReference>
<dbReference type="Gene3D" id="3.30.63.10">
    <property type="entry name" value="Guanylate Kinase phosphate binding domain"/>
    <property type="match status" value="1"/>
</dbReference>
<dbReference type="Gene3D" id="3.40.50.300">
    <property type="entry name" value="P-loop containing nucleotide triphosphate hydrolases"/>
    <property type="match status" value="1"/>
</dbReference>
<dbReference type="HAMAP" id="MF_00328">
    <property type="entry name" value="Guanylate_kinase"/>
    <property type="match status" value="1"/>
</dbReference>
<dbReference type="InterPro" id="IPR008145">
    <property type="entry name" value="GK/Ca_channel_bsu"/>
</dbReference>
<dbReference type="InterPro" id="IPR008144">
    <property type="entry name" value="Guanylate_kin-like_dom"/>
</dbReference>
<dbReference type="InterPro" id="IPR017665">
    <property type="entry name" value="Guanylate_kinase"/>
</dbReference>
<dbReference type="InterPro" id="IPR020590">
    <property type="entry name" value="Guanylate_kinase_CS"/>
</dbReference>
<dbReference type="InterPro" id="IPR027417">
    <property type="entry name" value="P-loop_NTPase"/>
</dbReference>
<dbReference type="NCBIfam" id="TIGR03263">
    <property type="entry name" value="guanyl_kin"/>
    <property type="match status" value="1"/>
</dbReference>
<dbReference type="PANTHER" id="PTHR23117:SF13">
    <property type="entry name" value="GUANYLATE KINASE"/>
    <property type="match status" value="1"/>
</dbReference>
<dbReference type="PANTHER" id="PTHR23117">
    <property type="entry name" value="GUANYLATE KINASE-RELATED"/>
    <property type="match status" value="1"/>
</dbReference>
<dbReference type="Pfam" id="PF00625">
    <property type="entry name" value="Guanylate_kin"/>
    <property type="match status" value="1"/>
</dbReference>
<dbReference type="SMART" id="SM00072">
    <property type="entry name" value="GuKc"/>
    <property type="match status" value="1"/>
</dbReference>
<dbReference type="SUPFAM" id="SSF52540">
    <property type="entry name" value="P-loop containing nucleoside triphosphate hydrolases"/>
    <property type="match status" value="1"/>
</dbReference>
<dbReference type="PROSITE" id="PS00856">
    <property type="entry name" value="GUANYLATE_KINASE_1"/>
    <property type="match status" value="1"/>
</dbReference>
<dbReference type="PROSITE" id="PS50052">
    <property type="entry name" value="GUANYLATE_KINASE_2"/>
    <property type="match status" value="1"/>
</dbReference>
<comment type="function">
    <text evidence="1">Essential for recycling GMP and indirectly, cGMP.</text>
</comment>
<comment type="catalytic activity">
    <reaction evidence="1">
        <text>GMP + ATP = GDP + ADP</text>
        <dbReference type="Rhea" id="RHEA:20780"/>
        <dbReference type="ChEBI" id="CHEBI:30616"/>
        <dbReference type="ChEBI" id="CHEBI:58115"/>
        <dbReference type="ChEBI" id="CHEBI:58189"/>
        <dbReference type="ChEBI" id="CHEBI:456216"/>
        <dbReference type="EC" id="2.7.4.8"/>
    </reaction>
</comment>
<comment type="subcellular location">
    <subcellularLocation>
        <location evidence="1">Cytoplasm</location>
    </subcellularLocation>
</comment>
<comment type="similarity">
    <text evidence="1">Belongs to the guanylate kinase family.</text>
</comment>
<organism>
    <name type="scientific">Chlorobium luteolum (strain DSM 273 / BCRC 81028 / 2530)</name>
    <name type="common">Pelodictyon luteolum</name>
    <dbReference type="NCBI Taxonomy" id="319225"/>
    <lineage>
        <taxon>Bacteria</taxon>
        <taxon>Pseudomonadati</taxon>
        <taxon>Chlorobiota</taxon>
        <taxon>Chlorobiia</taxon>
        <taxon>Chlorobiales</taxon>
        <taxon>Chlorobiaceae</taxon>
        <taxon>Chlorobium/Pelodictyon group</taxon>
        <taxon>Pelodictyon</taxon>
    </lineage>
</organism>
<protein>
    <recommendedName>
        <fullName evidence="1">Guanylate kinase</fullName>
        <ecNumber evidence="1">2.7.4.8</ecNumber>
    </recommendedName>
    <alternativeName>
        <fullName evidence="1">GMP kinase</fullName>
    </alternativeName>
</protein>
<feature type="chain" id="PRO_0000266365" description="Guanylate kinase">
    <location>
        <begin position="1"/>
        <end position="197"/>
    </location>
</feature>
<feature type="domain" description="Guanylate kinase-like" evidence="1">
    <location>
        <begin position="9"/>
        <end position="188"/>
    </location>
</feature>
<feature type="binding site" evidence="1">
    <location>
        <begin position="16"/>
        <end position="23"/>
    </location>
    <ligand>
        <name>ATP</name>
        <dbReference type="ChEBI" id="CHEBI:30616"/>
    </ligand>
</feature>
<keyword id="KW-0067">ATP-binding</keyword>
<keyword id="KW-0963">Cytoplasm</keyword>
<keyword id="KW-0418">Kinase</keyword>
<keyword id="KW-0547">Nucleotide-binding</keyword>
<keyword id="KW-1185">Reference proteome</keyword>
<keyword id="KW-0808">Transferase</keyword>
<proteinExistence type="inferred from homology"/>